<organism>
    <name type="scientific">Panax ginseng</name>
    <name type="common">Korean ginseng</name>
    <dbReference type="NCBI Taxonomy" id="4054"/>
    <lineage>
        <taxon>Eukaryota</taxon>
        <taxon>Viridiplantae</taxon>
        <taxon>Streptophyta</taxon>
        <taxon>Embryophyta</taxon>
        <taxon>Tracheophyta</taxon>
        <taxon>Spermatophyta</taxon>
        <taxon>Magnoliopsida</taxon>
        <taxon>eudicotyledons</taxon>
        <taxon>Gunneridae</taxon>
        <taxon>Pentapetalae</taxon>
        <taxon>asterids</taxon>
        <taxon>campanulids</taxon>
        <taxon>Apiales</taxon>
        <taxon>Araliaceae</taxon>
        <taxon>Panax</taxon>
    </lineage>
</organism>
<gene>
    <name type="primary">rps15</name>
    <name type="ORF">PSC1254</name>
</gene>
<sequence>MIKNPFSGIILKEENKDNRGSAEFQVVSFTNRIRRLTSHLELHKKDYLSQRGLRKILGKRQRLLAYLSKKNRVRYKELIGRLDIRETKIR</sequence>
<name>RR15_PANGI</name>
<accession>Q68RU9</accession>
<reference key="1">
    <citation type="journal article" date="2004" name="DNA Res.">
        <title>Complete chloroplast genome sequence from Korea ginseng (Panax schinseng Nees) and comparative analysis of sequence evolution among 17 vascular plants.</title>
        <authorList>
            <person name="Kim K.-J."/>
            <person name="Lee H.-L."/>
        </authorList>
    </citation>
    <scope>NUCLEOTIDE SEQUENCE [LARGE SCALE GENOMIC DNA]</scope>
</reference>
<dbReference type="EMBL" id="AY582139">
    <property type="protein sequence ID" value="AAT98567.1"/>
    <property type="molecule type" value="Genomic_DNA"/>
</dbReference>
<dbReference type="RefSeq" id="YP_087023.1">
    <property type="nucleotide sequence ID" value="NC_006290.1"/>
</dbReference>
<dbReference type="SMR" id="Q68RU9"/>
<dbReference type="GeneID" id="3021470"/>
<dbReference type="GO" id="GO:0009507">
    <property type="term" value="C:chloroplast"/>
    <property type="evidence" value="ECO:0007669"/>
    <property type="project" value="UniProtKB-SubCell"/>
</dbReference>
<dbReference type="GO" id="GO:1990904">
    <property type="term" value="C:ribonucleoprotein complex"/>
    <property type="evidence" value="ECO:0007669"/>
    <property type="project" value="UniProtKB-KW"/>
</dbReference>
<dbReference type="GO" id="GO:0005840">
    <property type="term" value="C:ribosome"/>
    <property type="evidence" value="ECO:0007669"/>
    <property type="project" value="UniProtKB-KW"/>
</dbReference>
<dbReference type="GO" id="GO:0003735">
    <property type="term" value="F:structural constituent of ribosome"/>
    <property type="evidence" value="ECO:0007669"/>
    <property type="project" value="InterPro"/>
</dbReference>
<dbReference type="GO" id="GO:0006412">
    <property type="term" value="P:translation"/>
    <property type="evidence" value="ECO:0007669"/>
    <property type="project" value="UniProtKB-UniRule"/>
</dbReference>
<dbReference type="CDD" id="cd00353">
    <property type="entry name" value="Ribosomal_S15p_S13e"/>
    <property type="match status" value="1"/>
</dbReference>
<dbReference type="Gene3D" id="1.10.287.10">
    <property type="entry name" value="S15/NS1, RNA-binding"/>
    <property type="match status" value="1"/>
</dbReference>
<dbReference type="HAMAP" id="MF_01343_B">
    <property type="entry name" value="Ribosomal_uS15_B"/>
    <property type="match status" value="1"/>
</dbReference>
<dbReference type="InterPro" id="IPR000589">
    <property type="entry name" value="Ribosomal_uS15"/>
</dbReference>
<dbReference type="InterPro" id="IPR005290">
    <property type="entry name" value="Ribosomal_uS15_bac-type"/>
</dbReference>
<dbReference type="InterPro" id="IPR009068">
    <property type="entry name" value="uS15_NS1_RNA-bd_sf"/>
</dbReference>
<dbReference type="NCBIfam" id="TIGR00952">
    <property type="entry name" value="S15_bact"/>
    <property type="match status" value="1"/>
</dbReference>
<dbReference type="PANTHER" id="PTHR23321">
    <property type="entry name" value="RIBOSOMAL PROTEIN S15, BACTERIAL AND ORGANELLAR"/>
    <property type="match status" value="1"/>
</dbReference>
<dbReference type="PANTHER" id="PTHR23321:SF26">
    <property type="entry name" value="SMALL RIBOSOMAL SUBUNIT PROTEIN US15M"/>
    <property type="match status" value="1"/>
</dbReference>
<dbReference type="Pfam" id="PF00312">
    <property type="entry name" value="Ribosomal_S15"/>
    <property type="match status" value="1"/>
</dbReference>
<dbReference type="SMART" id="SM01387">
    <property type="entry name" value="Ribosomal_S15"/>
    <property type="match status" value="1"/>
</dbReference>
<dbReference type="SUPFAM" id="SSF47060">
    <property type="entry name" value="S15/NS1 RNA-binding domain"/>
    <property type="match status" value="1"/>
</dbReference>
<dbReference type="PROSITE" id="PS00362">
    <property type="entry name" value="RIBOSOMAL_S15"/>
    <property type="match status" value="1"/>
</dbReference>
<proteinExistence type="inferred from homology"/>
<comment type="subunit">
    <text evidence="1">Part of the 30S ribosomal subunit.</text>
</comment>
<comment type="subcellular location">
    <subcellularLocation>
        <location>Plastid</location>
        <location>Chloroplast</location>
    </subcellularLocation>
</comment>
<comment type="similarity">
    <text evidence="2">Belongs to the universal ribosomal protein uS15 family.</text>
</comment>
<keyword id="KW-0150">Chloroplast</keyword>
<keyword id="KW-0934">Plastid</keyword>
<keyword id="KW-0687">Ribonucleoprotein</keyword>
<keyword id="KW-0689">Ribosomal protein</keyword>
<evidence type="ECO:0000250" key="1"/>
<evidence type="ECO:0000305" key="2"/>
<geneLocation type="chloroplast"/>
<protein>
    <recommendedName>
        <fullName evidence="2">Small ribosomal subunit protein uS15c</fullName>
    </recommendedName>
    <alternativeName>
        <fullName>30S ribosomal protein S15, chloroplastic</fullName>
    </alternativeName>
</protein>
<feature type="chain" id="PRO_0000115644" description="Small ribosomal subunit protein uS15c">
    <location>
        <begin position="1"/>
        <end position="90"/>
    </location>
</feature>